<dbReference type="EMBL" id="CP000572">
    <property type="protein sequence ID" value="ABN89425.1"/>
    <property type="molecule type" value="Genomic_DNA"/>
</dbReference>
<dbReference type="RefSeq" id="WP_004199273.1">
    <property type="nucleotide sequence ID" value="NC_009076.1"/>
</dbReference>
<dbReference type="SMR" id="A3P0A9"/>
<dbReference type="GeneID" id="98107156"/>
<dbReference type="KEGG" id="bpl:BURPS1106A_3800"/>
<dbReference type="HOGENOM" id="CLU_144911_0_1_4"/>
<dbReference type="Proteomes" id="UP000006738">
    <property type="component" value="Chromosome I"/>
</dbReference>
<dbReference type="GO" id="GO:0005737">
    <property type="term" value="C:cytoplasm"/>
    <property type="evidence" value="ECO:0007669"/>
    <property type="project" value="UniProtKB-ARBA"/>
</dbReference>
<dbReference type="GO" id="GO:0015935">
    <property type="term" value="C:small ribosomal subunit"/>
    <property type="evidence" value="ECO:0007669"/>
    <property type="project" value="InterPro"/>
</dbReference>
<dbReference type="GO" id="GO:0019843">
    <property type="term" value="F:rRNA binding"/>
    <property type="evidence" value="ECO:0007669"/>
    <property type="project" value="UniProtKB-UniRule"/>
</dbReference>
<dbReference type="GO" id="GO:0003735">
    <property type="term" value="F:structural constituent of ribosome"/>
    <property type="evidence" value="ECO:0007669"/>
    <property type="project" value="InterPro"/>
</dbReference>
<dbReference type="GO" id="GO:0000028">
    <property type="term" value="P:ribosomal small subunit assembly"/>
    <property type="evidence" value="ECO:0007669"/>
    <property type="project" value="TreeGrafter"/>
</dbReference>
<dbReference type="GO" id="GO:0006412">
    <property type="term" value="P:translation"/>
    <property type="evidence" value="ECO:0007669"/>
    <property type="project" value="UniProtKB-UniRule"/>
</dbReference>
<dbReference type="FunFam" id="3.30.860.10:FF:000001">
    <property type="entry name" value="30S ribosomal protein S19"/>
    <property type="match status" value="1"/>
</dbReference>
<dbReference type="Gene3D" id="3.30.860.10">
    <property type="entry name" value="30s Ribosomal Protein S19, Chain A"/>
    <property type="match status" value="1"/>
</dbReference>
<dbReference type="HAMAP" id="MF_00531">
    <property type="entry name" value="Ribosomal_uS19"/>
    <property type="match status" value="1"/>
</dbReference>
<dbReference type="InterPro" id="IPR002222">
    <property type="entry name" value="Ribosomal_uS19"/>
</dbReference>
<dbReference type="InterPro" id="IPR005732">
    <property type="entry name" value="Ribosomal_uS19_bac-type"/>
</dbReference>
<dbReference type="InterPro" id="IPR020934">
    <property type="entry name" value="Ribosomal_uS19_CS"/>
</dbReference>
<dbReference type="InterPro" id="IPR023575">
    <property type="entry name" value="Ribosomal_uS19_SF"/>
</dbReference>
<dbReference type="NCBIfam" id="TIGR01050">
    <property type="entry name" value="rpsS_bact"/>
    <property type="match status" value="1"/>
</dbReference>
<dbReference type="PANTHER" id="PTHR11880">
    <property type="entry name" value="RIBOSOMAL PROTEIN S19P FAMILY MEMBER"/>
    <property type="match status" value="1"/>
</dbReference>
<dbReference type="PANTHER" id="PTHR11880:SF8">
    <property type="entry name" value="SMALL RIBOSOMAL SUBUNIT PROTEIN US19M"/>
    <property type="match status" value="1"/>
</dbReference>
<dbReference type="Pfam" id="PF00203">
    <property type="entry name" value="Ribosomal_S19"/>
    <property type="match status" value="1"/>
</dbReference>
<dbReference type="PIRSF" id="PIRSF002144">
    <property type="entry name" value="Ribosomal_S19"/>
    <property type="match status" value="1"/>
</dbReference>
<dbReference type="PRINTS" id="PR00975">
    <property type="entry name" value="RIBOSOMALS19"/>
</dbReference>
<dbReference type="SUPFAM" id="SSF54570">
    <property type="entry name" value="Ribosomal protein S19"/>
    <property type="match status" value="1"/>
</dbReference>
<dbReference type="PROSITE" id="PS00323">
    <property type="entry name" value="RIBOSOMAL_S19"/>
    <property type="match status" value="1"/>
</dbReference>
<sequence length="91" mass="10108">MARSVKKGPFCDAHLLKKVEAAAASRDKKPIKTWSRRSTILPDFIGLTIAVHNGRQHVPVYISENMVGHKLGEFALTRTFKGHAADKKAKK</sequence>
<comment type="function">
    <text evidence="1">Protein S19 forms a complex with S13 that binds strongly to the 16S ribosomal RNA.</text>
</comment>
<comment type="similarity">
    <text evidence="1">Belongs to the universal ribosomal protein uS19 family.</text>
</comment>
<protein>
    <recommendedName>
        <fullName evidence="1">Small ribosomal subunit protein uS19</fullName>
    </recommendedName>
    <alternativeName>
        <fullName evidence="2">30S ribosomal protein S19</fullName>
    </alternativeName>
</protein>
<keyword id="KW-0687">Ribonucleoprotein</keyword>
<keyword id="KW-0689">Ribosomal protein</keyword>
<keyword id="KW-0694">RNA-binding</keyword>
<keyword id="KW-0699">rRNA-binding</keyword>
<evidence type="ECO:0000255" key="1">
    <source>
        <dbReference type="HAMAP-Rule" id="MF_00531"/>
    </source>
</evidence>
<evidence type="ECO:0000305" key="2"/>
<gene>
    <name evidence="1" type="primary">rpsS</name>
    <name type="ordered locus">BURPS1106A_3800</name>
</gene>
<organism>
    <name type="scientific">Burkholderia pseudomallei (strain 1106a)</name>
    <dbReference type="NCBI Taxonomy" id="357348"/>
    <lineage>
        <taxon>Bacteria</taxon>
        <taxon>Pseudomonadati</taxon>
        <taxon>Pseudomonadota</taxon>
        <taxon>Betaproteobacteria</taxon>
        <taxon>Burkholderiales</taxon>
        <taxon>Burkholderiaceae</taxon>
        <taxon>Burkholderia</taxon>
        <taxon>pseudomallei group</taxon>
    </lineage>
</organism>
<name>RS19_BURP0</name>
<feature type="chain" id="PRO_1000051025" description="Small ribosomal subunit protein uS19">
    <location>
        <begin position="1"/>
        <end position="91"/>
    </location>
</feature>
<accession>A3P0A9</accession>
<reference key="1">
    <citation type="journal article" date="2010" name="Genome Biol. Evol.">
        <title>Continuing evolution of Burkholderia mallei through genome reduction and large-scale rearrangements.</title>
        <authorList>
            <person name="Losada L."/>
            <person name="Ronning C.M."/>
            <person name="DeShazer D."/>
            <person name="Woods D."/>
            <person name="Fedorova N."/>
            <person name="Kim H.S."/>
            <person name="Shabalina S.A."/>
            <person name="Pearson T.R."/>
            <person name="Brinkac L."/>
            <person name="Tan P."/>
            <person name="Nandi T."/>
            <person name="Crabtree J."/>
            <person name="Badger J."/>
            <person name="Beckstrom-Sternberg S."/>
            <person name="Saqib M."/>
            <person name="Schutzer S.E."/>
            <person name="Keim P."/>
            <person name="Nierman W.C."/>
        </authorList>
    </citation>
    <scope>NUCLEOTIDE SEQUENCE [LARGE SCALE GENOMIC DNA]</scope>
    <source>
        <strain>1106a</strain>
    </source>
</reference>
<proteinExistence type="inferred from homology"/>